<feature type="chain" id="PRO_1000064583" description="UPF0266 membrane protein YobD">
    <location>
        <begin position="1"/>
        <end position="152"/>
    </location>
</feature>
<feature type="transmembrane region" description="Helical" evidence="1">
    <location>
        <begin position="6"/>
        <end position="26"/>
    </location>
</feature>
<feature type="transmembrane region" description="Helical" evidence="1">
    <location>
        <begin position="45"/>
        <end position="65"/>
    </location>
</feature>
<feature type="transmembrane region" description="Helical" evidence="1">
    <location>
        <begin position="67"/>
        <end position="87"/>
    </location>
</feature>
<organism>
    <name type="scientific">Escherichia coli (strain UTI89 / UPEC)</name>
    <dbReference type="NCBI Taxonomy" id="364106"/>
    <lineage>
        <taxon>Bacteria</taxon>
        <taxon>Pseudomonadati</taxon>
        <taxon>Pseudomonadota</taxon>
        <taxon>Gammaproteobacteria</taxon>
        <taxon>Enterobacterales</taxon>
        <taxon>Enterobacteriaceae</taxon>
        <taxon>Escherichia</taxon>
    </lineage>
</organism>
<keyword id="KW-0997">Cell inner membrane</keyword>
<keyword id="KW-1003">Cell membrane</keyword>
<keyword id="KW-0472">Membrane</keyword>
<keyword id="KW-0812">Transmembrane</keyword>
<keyword id="KW-1133">Transmembrane helix</keyword>
<reference key="1">
    <citation type="journal article" date="2006" name="Proc. Natl. Acad. Sci. U.S.A.">
        <title>Identification of genes subject to positive selection in uropathogenic strains of Escherichia coli: a comparative genomics approach.</title>
        <authorList>
            <person name="Chen S.L."/>
            <person name="Hung C.-S."/>
            <person name="Xu J."/>
            <person name="Reigstad C.S."/>
            <person name="Magrini V."/>
            <person name="Sabo A."/>
            <person name="Blasiar D."/>
            <person name="Bieri T."/>
            <person name="Meyer R.R."/>
            <person name="Ozersky P."/>
            <person name="Armstrong J.R."/>
            <person name="Fulton R.S."/>
            <person name="Latreille J.P."/>
            <person name="Spieth J."/>
            <person name="Hooton T.M."/>
            <person name="Mardis E.R."/>
            <person name="Hultgren S.J."/>
            <person name="Gordon J.I."/>
        </authorList>
    </citation>
    <scope>NUCLEOTIDE SEQUENCE [LARGE SCALE GENOMIC DNA]</scope>
    <source>
        <strain>UTI89 / UPEC</strain>
    </source>
</reference>
<protein>
    <recommendedName>
        <fullName evidence="1">UPF0266 membrane protein YobD</fullName>
    </recommendedName>
</protein>
<dbReference type="EMBL" id="CP000243">
    <property type="protein sequence ID" value="ABE07494.1"/>
    <property type="molecule type" value="Genomic_DNA"/>
</dbReference>
<dbReference type="RefSeq" id="WP_000156257.1">
    <property type="nucleotide sequence ID" value="NZ_CP064825.1"/>
</dbReference>
<dbReference type="SMR" id="Q1RAX0"/>
<dbReference type="KEGG" id="eci:UTI89_C2018"/>
<dbReference type="HOGENOM" id="CLU_133645_0_0_6"/>
<dbReference type="Proteomes" id="UP000001952">
    <property type="component" value="Chromosome"/>
</dbReference>
<dbReference type="GO" id="GO:0005886">
    <property type="term" value="C:plasma membrane"/>
    <property type="evidence" value="ECO:0007669"/>
    <property type="project" value="UniProtKB-SubCell"/>
</dbReference>
<dbReference type="HAMAP" id="MF_01071">
    <property type="entry name" value="UPF0266"/>
    <property type="match status" value="1"/>
</dbReference>
<dbReference type="InterPro" id="IPR009328">
    <property type="entry name" value="DUF986"/>
</dbReference>
<dbReference type="NCBIfam" id="NF002791">
    <property type="entry name" value="PRK02913.1"/>
    <property type="match status" value="1"/>
</dbReference>
<dbReference type="Pfam" id="PF06173">
    <property type="entry name" value="DUF986"/>
    <property type="match status" value="1"/>
</dbReference>
<dbReference type="PIRSF" id="PIRSF020687">
    <property type="entry name" value="UCP020687"/>
    <property type="match status" value="1"/>
</dbReference>
<proteinExistence type="inferred from homology"/>
<name>YOBD_ECOUT</name>
<comment type="subcellular location">
    <subcellularLocation>
        <location evidence="1">Cell inner membrane</location>
        <topology evidence="1">Multi-pass membrane protein</topology>
    </subcellularLocation>
</comment>
<comment type="similarity">
    <text evidence="1">Belongs to the UPF0266 family.</text>
</comment>
<gene>
    <name evidence="1" type="primary">yobD</name>
    <name type="ordered locus">UTI89_C2018</name>
</gene>
<accession>Q1RAX0</accession>
<sequence length="152" mass="17601">MTITDLVLILFIAALLAFAIYDQFIMPRRNGPTLLAIPLLRRGRIDSVIFVGLIVILIYNNVTNHGALITTWLLSALALMGFYIFWIRVPKIIFKQKGFFFANVWIEYSRIKAMNLSEDGVLVMQLEQRRLLIRVRNIDDLEKVYKLLVSTQ</sequence>
<evidence type="ECO:0000255" key="1">
    <source>
        <dbReference type="HAMAP-Rule" id="MF_01071"/>
    </source>
</evidence>